<keyword id="KW-0963">Cytoplasm</keyword>
<keyword id="KW-0227">DNA damage</keyword>
<keyword id="KW-0233">DNA recombination</keyword>
<keyword id="KW-0234">DNA repair</keyword>
<keyword id="KW-0238">DNA-binding</keyword>
<keyword id="KW-0255">Endonuclease</keyword>
<keyword id="KW-0378">Hydrolase</keyword>
<keyword id="KW-0460">Magnesium</keyword>
<keyword id="KW-0479">Metal-binding</keyword>
<keyword id="KW-0540">Nuclease</keyword>
<keyword id="KW-1185">Reference proteome</keyword>
<reference key="1">
    <citation type="submission" date="2008-06" db="EMBL/GenBank/DDBJ databases">
        <title>Complete sequence of Pelodictyon phaeoclathratiforme BU-1.</title>
        <authorList>
            <consortium name="US DOE Joint Genome Institute"/>
            <person name="Lucas S."/>
            <person name="Copeland A."/>
            <person name="Lapidus A."/>
            <person name="Glavina del Rio T."/>
            <person name="Dalin E."/>
            <person name="Tice H."/>
            <person name="Bruce D."/>
            <person name="Goodwin L."/>
            <person name="Pitluck S."/>
            <person name="Schmutz J."/>
            <person name="Larimer F."/>
            <person name="Land M."/>
            <person name="Hauser L."/>
            <person name="Kyrpides N."/>
            <person name="Mikhailova N."/>
            <person name="Liu Z."/>
            <person name="Li T."/>
            <person name="Zhao F."/>
            <person name="Overmann J."/>
            <person name="Bryant D.A."/>
            <person name="Richardson P."/>
        </authorList>
    </citation>
    <scope>NUCLEOTIDE SEQUENCE [LARGE SCALE GENOMIC DNA]</scope>
    <source>
        <strain>DSM 5477 / BU-1</strain>
    </source>
</reference>
<accession>B4SDW6</accession>
<feature type="chain" id="PRO_1000090544" description="Crossover junction endodeoxyribonuclease RuvC">
    <location>
        <begin position="1"/>
        <end position="191"/>
    </location>
</feature>
<feature type="active site" evidence="1">
    <location>
        <position position="7"/>
    </location>
</feature>
<feature type="active site" evidence="1">
    <location>
        <position position="67"/>
    </location>
</feature>
<feature type="active site" evidence="1">
    <location>
        <position position="140"/>
    </location>
</feature>
<feature type="binding site" evidence="1">
    <location>
        <position position="7"/>
    </location>
    <ligand>
        <name>Mg(2+)</name>
        <dbReference type="ChEBI" id="CHEBI:18420"/>
        <label>1</label>
    </ligand>
</feature>
<feature type="binding site" evidence="1">
    <location>
        <position position="67"/>
    </location>
    <ligand>
        <name>Mg(2+)</name>
        <dbReference type="ChEBI" id="CHEBI:18420"/>
        <label>2</label>
    </ligand>
</feature>
<feature type="binding site" evidence="1">
    <location>
        <position position="140"/>
    </location>
    <ligand>
        <name>Mg(2+)</name>
        <dbReference type="ChEBI" id="CHEBI:18420"/>
        <label>1</label>
    </ligand>
</feature>
<sequence length="191" mass="20704">MVVLGVDPGSRLTGYGVIRQEGTFFTVLSCGVIRLHPRSSHAERIGQIYRELEAVITDYAPECVALETVFLSRNVQSALKLGQVRGAVIALAMNRNLLLHEYAPREVKSAVTGKGAASKEQVAFMVARMLALNPVPEPFDVTDALGIALCDLLRGGSREPFKSAGQSRKGGMSWSQFVGASPDMVIRLFQK</sequence>
<dbReference type="EC" id="3.1.21.10" evidence="1"/>
<dbReference type="EMBL" id="CP001110">
    <property type="protein sequence ID" value="ACF42957.1"/>
    <property type="molecule type" value="Genomic_DNA"/>
</dbReference>
<dbReference type="RefSeq" id="WP_012507452.1">
    <property type="nucleotide sequence ID" value="NC_011060.1"/>
</dbReference>
<dbReference type="SMR" id="B4SDW6"/>
<dbReference type="STRING" id="324925.Ppha_0658"/>
<dbReference type="KEGG" id="pph:Ppha_0658"/>
<dbReference type="eggNOG" id="COG0817">
    <property type="taxonomic scope" value="Bacteria"/>
</dbReference>
<dbReference type="HOGENOM" id="CLU_091257_3_0_10"/>
<dbReference type="OrthoDB" id="9805499at2"/>
<dbReference type="Proteomes" id="UP000002724">
    <property type="component" value="Chromosome"/>
</dbReference>
<dbReference type="GO" id="GO:0005737">
    <property type="term" value="C:cytoplasm"/>
    <property type="evidence" value="ECO:0007669"/>
    <property type="project" value="UniProtKB-SubCell"/>
</dbReference>
<dbReference type="GO" id="GO:0048476">
    <property type="term" value="C:Holliday junction resolvase complex"/>
    <property type="evidence" value="ECO:0007669"/>
    <property type="project" value="UniProtKB-UniRule"/>
</dbReference>
<dbReference type="GO" id="GO:0008821">
    <property type="term" value="F:crossover junction DNA endonuclease activity"/>
    <property type="evidence" value="ECO:0007669"/>
    <property type="project" value="UniProtKB-UniRule"/>
</dbReference>
<dbReference type="GO" id="GO:0003677">
    <property type="term" value="F:DNA binding"/>
    <property type="evidence" value="ECO:0007669"/>
    <property type="project" value="UniProtKB-KW"/>
</dbReference>
<dbReference type="GO" id="GO:0000287">
    <property type="term" value="F:magnesium ion binding"/>
    <property type="evidence" value="ECO:0007669"/>
    <property type="project" value="UniProtKB-UniRule"/>
</dbReference>
<dbReference type="GO" id="GO:0006310">
    <property type="term" value="P:DNA recombination"/>
    <property type="evidence" value="ECO:0007669"/>
    <property type="project" value="UniProtKB-UniRule"/>
</dbReference>
<dbReference type="GO" id="GO:0006281">
    <property type="term" value="P:DNA repair"/>
    <property type="evidence" value="ECO:0007669"/>
    <property type="project" value="UniProtKB-UniRule"/>
</dbReference>
<dbReference type="CDD" id="cd16962">
    <property type="entry name" value="RuvC"/>
    <property type="match status" value="1"/>
</dbReference>
<dbReference type="FunFam" id="3.30.420.10:FF:000002">
    <property type="entry name" value="Crossover junction endodeoxyribonuclease RuvC"/>
    <property type="match status" value="1"/>
</dbReference>
<dbReference type="Gene3D" id="3.30.420.10">
    <property type="entry name" value="Ribonuclease H-like superfamily/Ribonuclease H"/>
    <property type="match status" value="1"/>
</dbReference>
<dbReference type="HAMAP" id="MF_00034">
    <property type="entry name" value="RuvC"/>
    <property type="match status" value="1"/>
</dbReference>
<dbReference type="InterPro" id="IPR012337">
    <property type="entry name" value="RNaseH-like_sf"/>
</dbReference>
<dbReference type="InterPro" id="IPR036397">
    <property type="entry name" value="RNaseH_sf"/>
</dbReference>
<dbReference type="InterPro" id="IPR020563">
    <property type="entry name" value="X-over_junc_endoDNase_Mg_BS"/>
</dbReference>
<dbReference type="InterPro" id="IPR002176">
    <property type="entry name" value="X-over_junc_endoDNase_RuvC"/>
</dbReference>
<dbReference type="NCBIfam" id="TIGR00228">
    <property type="entry name" value="ruvC"/>
    <property type="match status" value="1"/>
</dbReference>
<dbReference type="PANTHER" id="PTHR30194">
    <property type="entry name" value="CROSSOVER JUNCTION ENDODEOXYRIBONUCLEASE RUVC"/>
    <property type="match status" value="1"/>
</dbReference>
<dbReference type="PANTHER" id="PTHR30194:SF3">
    <property type="entry name" value="CROSSOVER JUNCTION ENDODEOXYRIBONUCLEASE RUVC"/>
    <property type="match status" value="1"/>
</dbReference>
<dbReference type="Pfam" id="PF02075">
    <property type="entry name" value="RuvC"/>
    <property type="match status" value="1"/>
</dbReference>
<dbReference type="PRINTS" id="PR00696">
    <property type="entry name" value="RSOLVASERUVC"/>
</dbReference>
<dbReference type="SUPFAM" id="SSF53098">
    <property type="entry name" value="Ribonuclease H-like"/>
    <property type="match status" value="1"/>
</dbReference>
<dbReference type="PROSITE" id="PS01321">
    <property type="entry name" value="RUVC"/>
    <property type="match status" value="1"/>
</dbReference>
<proteinExistence type="inferred from homology"/>
<name>RUVC_PELPB</name>
<organism>
    <name type="scientific">Pelodictyon phaeoclathratiforme (strain DSM 5477 / BU-1)</name>
    <dbReference type="NCBI Taxonomy" id="324925"/>
    <lineage>
        <taxon>Bacteria</taxon>
        <taxon>Pseudomonadati</taxon>
        <taxon>Chlorobiota</taxon>
        <taxon>Chlorobiia</taxon>
        <taxon>Chlorobiales</taxon>
        <taxon>Chlorobiaceae</taxon>
        <taxon>Chlorobium/Pelodictyon group</taxon>
        <taxon>Pelodictyon</taxon>
    </lineage>
</organism>
<comment type="function">
    <text evidence="1">The RuvA-RuvB-RuvC complex processes Holliday junction (HJ) DNA during genetic recombination and DNA repair. Endonuclease that resolves HJ intermediates. Cleaves cruciform DNA by making single-stranded nicks across the HJ at symmetrical positions within the homologous arms, yielding a 5'-phosphate and a 3'-hydroxyl group; requires a central core of homology in the junction. The consensus cleavage sequence is 5'-(A/T)TT(C/G)-3'. Cleavage occurs on the 3'-side of the TT dinucleotide at the point of strand exchange. HJ branch migration catalyzed by RuvA-RuvB allows RuvC to scan DNA until it finds its consensus sequence, where it cleaves and resolves the cruciform DNA.</text>
</comment>
<comment type="catalytic activity">
    <reaction evidence="1">
        <text>Endonucleolytic cleavage at a junction such as a reciprocal single-stranded crossover between two homologous DNA duplexes (Holliday junction).</text>
        <dbReference type="EC" id="3.1.21.10"/>
    </reaction>
</comment>
<comment type="cofactor">
    <cofactor evidence="1">
        <name>Mg(2+)</name>
        <dbReference type="ChEBI" id="CHEBI:18420"/>
    </cofactor>
    <text evidence="1">Binds 2 Mg(2+) ion per subunit.</text>
</comment>
<comment type="subunit">
    <text evidence="1">Homodimer which binds Holliday junction (HJ) DNA. The HJ becomes 2-fold symmetrical on binding to RuvC with unstacked arms; it has a different conformation from HJ DNA in complex with RuvA. In the full resolvosome a probable DNA-RuvA(4)-RuvB(12)-RuvC(2) complex forms which resolves the HJ.</text>
</comment>
<comment type="subcellular location">
    <subcellularLocation>
        <location evidence="1">Cytoplasm</location>
    </subcellularLocation>
</comment>
<comment type="similarity">
    <text evidence="1">Belongs to the RuvC family.</text>
</comment>
<gene>
    <name evidence="1" type="primary">ruvC</name>
    <name type="ordered locus">Ppha_0658</name>
</gene>
<protein>
    <recommendedName>
        <fullName evidence="1">Crossover junction endodeoxyribonuclease RuvC</fullName>
        <ecNumber evidence="1">3.1.21.10</ecNumber>
    </recommendedName>
    <alternativeName>
        <fullName evidence="1">Holliday junction nuclease RuvC</fullName>
    </alternativeName>
    <alternativeName>
        <fullName evidence="1">Holliday junction resolvase RuvC</fullName>
    </alternativeName>
</protein>
<evidence type="ECO:0000255" key="1">
    <source>
        <dbReference type="HAMAP-Rule" id="MF_00034"/>
    </source>
</evidence>